<name>DAD1_MALDO</name>
<organism>
    <name type="scientific">Malus domestica</name>
    <name type="common">Apple</name>
    <name type="synonym">Pyrus malus</name>
    <dbReference type="NCBI Taxonomy" id="3750"/>
    <lineage>
        <taxon>Eukaryota</taxon>
        <taxon>Viridiplantae</taxon>
        <taxon>Streptophyta</taxon>
        <taxon>Embryophyta</taxon>
        <taxon>Tracheophyta</taxon>
        <taxon>Spermatophyta</taxon>
        <taxon>Magnoliopsida</taxon>
        <taxon>eudicotyledons</taxon>
        <taxon>Gunneridae</taxon>
        <taxon>Pentapetalae</taxon>
        <taxon>rosids</taxon>
        <taxon>fabids</taxon>
        <taxon>Rosales</taxon>
        <taxon>Rosaceae</taxon>
        <taxon>Amygdaloideae</taxon>
        <taxon>Maleae</taxon>
        <taxon>Malus</taxon>
    </lineage>
</organism>
<feature type="chain" id="PRO_0000124026" description="Dolichyl-diphosphooligosaccharide--protein glycosyltransferase subunit DAD1">
    <location>
        <begin position="1"/>
        <end position="119"/>
    </location>
</feature>
<feature type="topological domain" description="Cytoplasmic" evidence="3">
    <location>
        <begin position="1"/>
        <end position="35"/>
    </location>
</feature>
<feature type="transmembrane region" description="Helical" evidence="3">
    <location>
        <begin position="36"/>
        <end position="56"/>
    </location>
</feature>
<feature type="topological domain" description="Lumenal" evidence="3">
    <location>
        <begin position="57"/>
        <end position="59"/>
    </location>
</feature>
<feature type="transmembrane region" description="Helical" evidence="3">
    <location>
        <begin position="60"/>
        <end position="80"/>
    </location>
</feature>
<feature type="topological domain" description="Cytoplasmic" evidence="3">
    <location>
        <begin position="81"/>
        <end position="98"/>
    </location>
</feature>
<feature type="transmembrane region" description="Helical" evidence="3">
    <location>
        <begin position="99"/>
        <end position="119"/>
    </location>
</feature>
<dbReference type="EMBL" id="U68560">
    <property type="protein sequence ID" value="AAB16804.1"/>
    <property type="molecule type" value="mRNA"/>
</dbReference>
<dbReference type="PIR" id="T17016">
    <property type="entry name" value="T17016"/>
</dbReference>
<dbReference type="RefSeq" id="NP_001280846.1">
    <property type="nucleotide sequence ID" value="NM_001293917.1"/>
</dbReference>
<dbReference type="SMR" id="O24060"/>
<dbReference type="EnsemblPlants" id="mRNA:MD05G0006500">
    <property type="protein sequence ID" value="mRNA:MD05G0006500"/>
    <property type="gene ID" value="MD05G0006500"/>
</dbReference>
<dbReference type="GeneID" id="103436627"/>
<dbReference type="Gramene" id="mRNA:MD05G0006500">
    <property type="protein sequence ID" value="mRNA:MD05G0006500"/>
    <property type="gene ID" value="MD05G0006500"/>
</dbReference>
<dbReference type="KEGG" id="mdm:103436627"/>
<dbReference type="OrthoDB" id="445566at2759"/>
<dbReference type="UniPathway" id="UPA00378"/>
<dbReference type="GO" id="GO:0008250">
    <property type="term" value="C:oligosaccharyltransferase complex"/>
    <property type="evidence" value="ECO:0007669"/>
    <property type="project" value="InterPro"/>
</dbReference>
<dbReference type="GO" id="GO:0006487">
    <property type="term" value="P:protein N-linked glycosylation"/>
    <property type="evidence" value="ECO:0007669"/>
    <property type="project" value="TreeGrafter"/>
</dbReference>
<dbReference type="InterPro" id="IPR003038">
    <property type="entry name" value="DAD/Ost2"/>
</dbReference>
<dbReference type="PANTHER" id="PTHR10705">
    <property type="entry name" value="DOLICHYL-DIPHOSPHOOLIGOSACCHARIDE--PROTEIN GLYCOSYLTRANSFERASE SUBUNIT DAD1"/>
    <property type="match status" value="1"/>
</dbReference>
<dbReference type="PANTHER" id="PTHR10705:SF0">
    <property type="entry name" value="DOLICHYL-DIPHOSPHOOLIGOSACCHARIDE--PROTEIN GLYCOSYLTRANSFERASE SUBUNIT DAD1"/>
    <property type="match status" value="1"/>
</dbReference>
<dbReference type="Pfam" id="PF02109">
    <property type="entry name" value="DAD"/>
    <property type="match status" value="1"/>
</dbReference>
<dbReference type="PIRSF" id="PIRSF005588">
    <property type="entry name" value="DAD"/>
    <property type="match status" value="1"/>
</dbReference>
<proteinExistence type="inferred from homology"/>
<reference key="1">
    <citation type="journal article" date="1998" name="Plant Sci.">
        <title>Expression of a cDNA from apple encoding a homologue of DAD1, an inhibitor of programmed cell death.</title>
        <authorList>
            <person name="Dong Y.-H."/>
            <person name="Zhan X.-C."/>
            <person name="Kvarnheden A."/>
            <person name="Atkinson R.G."/>
            <person name="Morris B.A."/>
            <person name="Gardner R.C."/>
        </authorList>
    </citation>
    <scope>NUCLEOTIDE SEQUENCE [MRNA]</scope>
    <source>
        <strain>cv. Granny Smith</strain>
    </source>
</reference>
<keyword id="KW-0053">Apoptosis</keyword>
<keyword id="KW-0256">Endoplasmic reticulum</keyword>
<keyword id="KW-0472">Membrane</keyword>
<keyword id="KW-0812">Transmembrane</keyword>
<keyword id="KW-1133">Transmembrane helix</keyword>
<evidence type="ECO:0000250" key="1"/>
<evidence type="ECO:0000250" key="2">
    <source>
        <dbReference type="UniProtKB" id="P46964"/>
    </source>
</evidence>
<evidence type="ECO:0000255" key="3"/>
<evidence type="ECO:0000305" key="4"/>
<accession>O24060</accession>
<comment type="function">
    <text evidence="2">Subunit of the oligosaccharyl transferase (OST) complex that catalyzes the initial transfer of a defined glycan (Glc(3)Man(9)GlcNAc(2) in eukaryotes) from the lipid carrier dolichol-pyrophosphate to an asparagine residue within an Asn-X-Ser/Thr consensus motif in nascent polypeptide chains, the first step in protein N-glycosylation. N-glycosylation occurs cotranslationally and the complex associates with the Sec61 complex at the channel-forming translocon complex that mediates protein translocation across the endoplasmic reticulum (ER). All subunits are required for a maximal enzyme activity.</text>
</comment>
<comment type="pathway">
    <text>Protein modification; protein glycosylation.</text>
</comment>
<comment type="subunit">
    <text evidence="2">Component of the oligosaccharyltransferase (OST) complex.</text>
</comment>
<comment type="subcellular location">
    <subcellularLocation>
        <location evidence="1">Endoplasmic reticulum membrane</location>
        <topology evidence="1">Multi-pass membrane protein</topology>
    </subcellularLocation>
</comment>
<comment type="similarity">
    <text evidence="4">Belongs to the DAD/OST2 family.</text>
</comment>
<gene>
    <name type="primary">DAD1</name>
</gene>
<sequence>MGKASHSSTAQDAVALFDSLRSAYSATPTTLKIIDLYIGFAVSTALIQVVYMAIVGSFPFNSFLSGVLSCIGTAVLAVCLRIQVNKENKEFKDLAPERAFADFVLCNLVLHMVIMNFLG</sequence>
<protein>
    <recommendedName>
        <fullName>Dolichyl-diphosphooligosaccharide--protein glycosyltransferase subunit DAD1</fullName>
        <shortName>Oligosaccharyl transferase subunit DAD1</shortName>
    </recommendedName>
    <alternativeName>
        <fullName>Defender against cell death 1</fullName>
        <shortName>DAD-1</shortName>
    </alternativeName>
</protein>